<protein>
    <recommendedName>
        <fullName evidence="1">Trigger factor</fullName>
        <shortName evidence="1">TF</shortName>
        <ecNumber evidence="1">5.2.1.8</ecNumber>
    </recommendedName>
    <alternativeName>
        <fullName evidence="1">PPIase</fullName>
    </alternativeName>
</protein>
<reference key="1">
    <citation type="submission" date="2005-09" db="EMBL/GenBank/DDBJ databases">
        <title>Complete genome sequence of Clostridium kluyveri and comparative genomics of Clostridia species.</title>
        <authorList>
            <person name="Inui M."/>
            <person name="Nonaka H."/>
            <person name="Shinoda Y."/>
            <person name="Ikenaga Y."/>
            <person name="Abe M."/>
            <person name="Naito K."/>
            <person name="Vertes A.A."/>
            <person name="Yukawa H."/>
        </authorList>
    </citation>
    <scope>NUCLEOTIDE SEQUENCE [LARGE SCALE GENOMIC DNA]</scope>
    <source>
        <strain>NBRC 12016</strain>
    </source>
</reference>
<gene>
    <name evidence="1" type="primary">tig</name>
    <name type="ordered locus">CKR_2960</name>
</gene>
<keyword id="KW-0131">Cell cycle</keyword>
<keyword id="KW-0132">Cell division</keyword>
<keyword id="KW-0143">Chaperone</keyword>
<keyword id="KW-0963">Cytoplasm</keyword>
<keyword id="KW-0413">Isomerase</keyword>
<keyword id="KW-0697">Rotamase</keyword>
<sequence>MNVKMEKIEENVVKLEITVEADKFNESMKKAFAKNAKKFNIPGFRKGKAPMNIIKKYYGEGVFYEDAMSFCCESTYPDALKENNVNPVDYPKIEVVQIGEGKEFIYTAEVTVFPEVKLGEYKGVEVKKNTYDVKEEDIEQELKNMQQKDARIETKENGSIENGNIAIIDFKGFVDGKEFEGGEGQDYQLEIGSGTFIDNFEEQLIGLNAGDSKEVNVKFPEEYGIDDLNGKEAVFKVTVKEIKVKEIPELDDEFAKEVSEFDTLDEVKEDIRNKKQEANKLREEREFEEAVLEAVCSNTEINIPEVMVEKEVDNMIRDLETRLKYQGLDLETYYKYTNNDEQKVREYMRETSEKKVKADLVITEIAKVEKVEASDEEIKEKATEIAKQYGSDDVEKMAKIILDGQKEYLKMQIVNEKVMKMLVDSSKIIA</sequence>
<proteinExistence type="inferred from homology"/>
<evidence type="ECO:0000255" key="1">
    <source>
        <dbReference type="HAMAP-Rule" id="MF_00303"/>
    </source>
</evidence>
<feature type="chain" id="PRO_1000198152" description="Trigger factor">
    <location>
        <begin position="1"/>
        <end position="430"/>
    </location>
</feature>
<feature type="domain" description="PPIase FKBP-type" evidence="1">
    <location>
        <begin position="163"/>
        <end position="248"/>
    </location>
</feature>
<name>TIG_CLOK1</name>
<accession>B9E686</accession>
<organism>
    <name type="scientific">Clostridium kluyveri (strain NBRC 12016)</name>
    <dbReference type="NCBI Taxonomy" id="583346"/>
    <lineage>
        <taxon>Bacteria</taxon>
        <taxon>Bacillati</taxon>
        <taxon>Bacillota</taxon>
        <taxon>Clostridia</taxon>
        <taxon>Eubacteriales</taxon>
        <taxon>Clostridiaceae</taxon>
        <taxon>Clostridium</taxon>
    </lineage>
</organism>
<comment type="function">
    <text evidence="1">Involved in protein export. Acts as a chaperone by maintaining the newly synthesized protein in an open conformation. Functions as a peptidyl-prolyl cis-trans isomerase.</text>
</comment>
<comment type="catalytic activity">
    <reaction evidence="1">
        <text>[protein]-peptidylproline (omega=180) = [protein]-peptidylproline (omega=0)</text>
        <dbReference type="Rhea" id="RHEA:16237"/>
        <dbReference type="Rhea" id="RHEA-COMP:10747"/>
        <dbReference type="Rhea" id="RHEA-COMP:10748"/>
        <dbReference type="ChEBI" id="CHEBI:83833"/>
        <dbReference type="ChEBI" id="CHEBI:83834"/>
        <dbReference type="EC" id="5.2.1.8"/>
    </reaction>
</comment>
<comment type="subcellular location">
    <subcellularLocation>
        <location>Cytoplasm</location>
    </subcellularLocation>
    <text evidence="1">About half TF is bound to the ribosome near the polypeptide exit tunnel while the other half is free in the cytoplasm.</text>
</comment>
<comment type="domain">
    <text evidence="1">Consists of 3 domains; the N-terminus binds the ribosome, the middle domain has PPIase activity, while the C-terminus has intrinsic chaperone activity on its own.</text>
</comment>
<comment type="similarity">
    <text evidence="1">Belongs to the FKBP-type PPIase family. Tig subfamily.</text>
</comment>
<dbReference type="EC" id="5.2.1.8" evidence="1"/>
<dbReference type="EMBL" id="AP009049">
    <property type="protein sequence ID" value="BAH08011.1"/>
    <property type="molecule type" value="Genomic_DNA"/>
</dbReference>
<dbReference type="RefSeq" id="WP_012103685.1">
    <property type="nucleotide sequence ID" value="NC_011837.1"/>
</dbReference>
<dbReference type="SMR" id="B9E686"/>
<dbReference type="KEGG" id="ckr:CKR_2960"/>
<dbReference type="HOGENOM" id="CLU_033058_3_2_9"/>
<dbReference type="Proteomes" id="UP000007969">
    <property type="component" value="Chromosome"/>
</dbReference>
<dbReference type="GO" id="GO:0005737">
    <property type="term" value="C:cytoplasm"/>
    <property type="evidence" value="ECO:0007669"/>
    <property type="project" value="UniProtKB-SubCell"/>
</dbReference>
<dbReference type="GO" id="GO:0003755">
    <property type="term" value="F:peptidyl-prolyl cis-trans isomerase activity"/>
    <property type="evidence" value="ECO:0007669"/>
    <property type="project" value="UniProtKB-UniRule"/>
</dbReference>
<dbReference type="GO" id="GO:0044183">
    <property type="term" value="F:protein folding chaperone"/>
    <property type="evidence" value="ECO:0007669"/>
    <property type="project" value="TreeGrafter"/>
</dbReference>
<dbReference type="GO" id="GO:0043022">
    <property type="term" value="F:ribosome binding"/>
    <property type="evidence" value="ECO:0007669"/>
    <property type="project" value="TreeGrafter"/>
</dbReference>
<dbReference type="GO" id="GO:0051083">
    <property type="term" value="P:'de novo' cotranslational protein folding"/>
    <property type="evidence" value="ECO:0007669"/>
    <property type="project" value="TreeGrafter"/>
</dbReference>
<dbReference type="GO" id="GO:0051301">
    <property type="term" value="P:cell division"/>
    <property type="evidence" value="ECO:0007669"/>
    <property type="project" value="UniProtKB-KW"/>
</dbReference>
<dbReference type="GO" id="GO:0061077">
    <property type="term" value="P:chaperone-mediated protein folding"/>
    <property type="evidence" value="ECO:0007669"/>
    <property type="project" value="TreeGrafter"/>
</dbReference>
<dbReference type="GO" id="GO:0015031">
    <property type="term" value="P:protein transport"/>
    <property type="evidence" value="ECO:0007669"/>
    <property type="project" value="UniProtKB-UniRule"/>
</dbReference>
<dbReference type="GO" id="GO:0043335">
    <property type="term" value="P:protein unfolding"/>
    <property type="evidence" value="ECO:0007669"/>
    <property type="project" value="TreeGrafter"/>
</dbReference>
<dbReference type="FunFam" id="3.10.50.40:FF:000001">
    <property type="entry name" value="Trigger factor"/>
    <property type="match status" value="1"/>
</dbReference>
<dbReference type="Gene3D" id="3.10.50.40">
    <property type="match status" value="1"/>
</dbReference>
<dbReference type="Gene3D" id="3.30.70.1050">
    <property type="entry name" value="Trigger factor ribosome-binding domain"/>
    <property type="match status" value="1"/>
</dbReference>
<dbReference type="Gene3D" id="1.10.3120.10">
    <property type="entry name" value="Trigger factor, C-terminal domain"/>
    <property type="match status" value="1"/>
</dbReference>
<dbReference type="HAMAP" id="MF_00303">
    <property type="entry name" value="Trigger_factor_Tig"/>
    <property type="match status" value="1"/>
</dbReference>
<dbReference type="InterPro" id="IPR046357">
    <property type="entry name" value="PPIase_dom_sf"/>
</dbReference>
<dbReference type="InterPro" id="IPR001179">
    <property type="entry name" value="PPIase_FKBP_dom"/>
</dbReference>
<dbReference type="InterPro" id="IPR005215">
    <property type="entry name" value="Trig_fac"/>
</dbReference>
<dbReference type="InterPro" id="IPR008880">
    <property type="entry name" value="Trigger_fac_C"/>
</dbReference>
<dbReference type="InterPro" id="IPR037041">
    <property type="entry name" value="Trigger_fac_C_sf"/>
</dbReference>
<dbReference type="InterPro" id="IPR008881">
    <property type="entry name" value="Trigger_fac_ribosome-bd_bac"/>
</dbReference>
<dbReference type="InterPro" id="IPR036611">
    <property type="entry name" value="Trigger_fac_ribosome-bd_sf"/>
</dbReference>
<dbReference type="InterPro" id="IPR027304">
    <property type="entry name" value="Trigger_fact/SurA_dom_sf"/>
</dbReference>
<dbReference type="NCBIfam" id="TIGR00115">
    <property type="entry name" value="tig"/>
    <property type="match status" value="1"/>
</dbReference>
<dbReference type="PANTHER" id="PTHR30560">
    <property type="entry name" value="TRIGGER FACTOR CHAPERONE AND PEPTIDYL-PROLYL CIS/TRANS ISOMERASE"/>
    <property type="match status" value="1"/>
</dbReference>
<dbReference type="PANTHER" id="PTHR30560:SF3">
    <property type="entry name" value="TRIGGER FACTOR-LIKE PROTEIN TIG, CHLOROPLASTIC"/>
    <property type="match status" value="1"/>
</dbReference>
<dbReference type="Pfam" id="PF00254">
    <property type="entry name" value="FKBP_C"/>
    <property type="match status" value="1"/>
</dbReference>
<dbReference type="Pfam" id="PF05698">
    <property type="entry name" value="Trigger_C"/>
    <property type="match status" value="1"/>
</dbReference>
<dbReference type="Pfam" id="PF05697">
    <property type="entry name" value="Trigger_N"/>
    <property type="match status" value="1"/>
</dbReference>
<dbReference type="PIRSF" id="PIRSF003095">
    <property type="entry name" value="Trigger_factor"/>
    <property type="match status" value="1"/>
</dbReference>
<dbReference type="SUPFAM" id="SSF54534">
    <property type="entry name" value="FKBP-like"/>
    <property type="match status" value="1"/>
</dbReference>
<dbReference type="SUPFAM" id="SSF109998">
    <property type="entry name" value="Triger factor/SurA peptide-binding domain-like"/>
    <property type="match status" value="1"/>
</dbReference>
<dbReference type="SUPFAM" id="SSF102735">
    <property type="entry name" value="Trigger factor ribosome-binding domain"/>
    <property type="match status" value="1"/>
</dbReference>
<dbReference type="PROSITE" id="PS50059">
    <property type="entry name" value="FKBP_PPIASE"/>
    <property type="match status" value="1"/>
</dbReference>